<name>MORA_RABIT</name>
<reference key="1">
    <citation type="journal article" date="1997" name="Arch. Biochem. Biophys.">
        <title>Purification, characterization and partial primary structure of morphine 6-dehydrogenase from rabbit liver cytosol.</title>
        <authorList>
            <person name="Yamano S."/>
            <person name="Ito K."/>
            <person name="Ogata S."/>
            <person name="Toki S."/>
        </authorList>
    </citation>
    <scope>PROTEIN SEQUENCE</scope>
    <source>
        <tissue>Liver</tissue>
    </source>
</reference>
<accession>P82810</accession>
<comment type="function">
    <text>Catalyzes the dehydrogenation of morphine to morphinone. Uses both NAD and NADP, but the activity is much greater with NAD than with NADP.</text>
</comment>
<comment type="catalytic activity">
    <reaction>
        <text>morphine + NAD(+) = morphinone + NADH + H(+)</text>
        <dbReference type="Rhea" id="RHEA:14317"/>
        <dbReference type="ChEBI" id="CHEBI:15378"/>
        <dbReference type="ChEBI" id="CHEBI:57540"/>
        <dbReference type="ChEBI" id="CHEBI:57728"/>
        <dbReference type="ChEBI" id="CHEBI:57945"/>
        <dbReference type="ChEBI" id="CHEBI:58097"/>
        <dbReference type="EC" id="1.1.1.218"/>
    </reaction>
</comment>
<comment type="catalytic activity">
    <reaction>
        <text>morphine + NADP(+) = morphinone + NADPH + H(+)</text>
        <dbReference type="Rhea" id="RHEA:14321"/>
        <dbReference type="ChEBI" id="CHEBI:15378"/>
        <dbReference type="ChEBI" id="CHEBI:57728"/>
        <dbReference type="ChEBI" id="CHEBI:57783"/>
        <dbReference type="ChEBI" id="CHEBI:58097"/>
        <dbReference type="ChEBI" id="CHEBI:58349"/>
        <dbReference type="EC" id="1.1.1.218"/>
    </reaction>
</comment>
<comment type="activity regulation">
    <text>Strongly inhibited by sulfhydryl reagents and quercetin, but not by pyrazole, barbital and indomethacine.</text>
</comment>
<comment type="biophysicochemical properties">
    <phDependence>
        <text>Optimum pH is 9.4 with NAD as the cofactor.</text>
    </phDependence>
</comment>
<comment type="subunit">
    <text>Monomer.</text>
</comment>
<comment type="subcellular location">
    <subcellularLocation>
        <location>Cytoplasm</location>
    </subcellularLocation>
</comment>
<comment type="PTM">
    <text>The N-terminus is blocked.</text>
</comment>
<comment type="similarity">
    <text evidence="3">Belongs to the aldo/keto reductase family.</text>
</comment>
<evidence type="ECO:0000250" key="1"/>
<evidence type="ECO:0000255" key="2"/>
<evidence type="ECO:0000305" key="3"/>
<sequence>HQRVTLNDGHSIPVLGFITYAPDEVIKPGEEMFPTDEHGKSIGVSNFNHKRVXNQVEXHPYLNQSKDIVLVAYSALGSSRDPWKQSPALIALRYQLQRGVVVLAKSFIEREIKVFGFQLSSEDMK</sequence>
<protein>
    <recommendedName>
        <fullName>Morphine 6-dehydrogenase</fullName>
        <ecNumber>1.1.1.218</ecNumber>
    </recommendedName>
</protein>
<dbReference type="EC" id="1.1.1.218"/>
<dbReference type="eggNOG" id="KOG1577">
    <property type="taxonomic scope" value="Eukaryota"/>
</dbReference>
<dbReference type="InParanoid" id="P82810"/>
<dbReference type="Proteomes" id="UP000001811">
    <property type="component" value="Unplaced"/>
</dbReference>
<dbReference type="GO" id="GO:0005737">
    <property type="term" value="C:cytoplasm"/>
    <property type="evidence" value="ECO:0007669"/>
    <property type="project" value="UniProtKB-SubCell"/>
</dbReference>
<dbReference type="GO" id="GO:0004033">
    <property type="term" value="F:aldo-keto reductase (NADPH) activity"/>
    <property type="evidence" value="ECO:0007669"/>
    <property type="project" value="TreeGrafter"/>
</dbReference>
<dbReference type="GO" id="GO:0050109">
    <property type="term" value="F:morphine 6-dehydrogenase activity"/>
    <property type="evidence" value="ECO:0007669"/>
    <property type="project" value="UniProtKB-EC"/>
</dbReference>
<dbReference type="GO" id="GO:0009820">
    <property type="term" value="P:alkaloid metabolic process"/>
    <property type="evidence" value="ECO:0007669"/>
    <property type="project" value="UniProtKB-KW"/>
</dbReference>
<dbReference type="Gene3D" id="3.20.20.100">
    <property type="entry name" value="NADP-dependent oxidoreductase domain"/>
    <property type="match status" value="1"/>
</dbReference>
<dbReference type="InterPro" id="IPR020471">
    <property type="entry name" value="AKR"/>
</dbReference>
<dbReference type="InterPro" id="IPR036812">
    <property type="entry name" value="NADP_OxRdtase_dom_sf"/>
</dbReference>
<dbReference type="PANTHER" id="PTHR43827">
    <property type="entry name" value="2,5-DIKETO-D-GLUCONIC ACID REDUCTASE"/>
    <property type="match status" value="1"/>
</dbReference>
<dbReference type="PANTHER" id="PTHR43827:SF14">
    <property type="entry name" value="NADP-DEPENDENT OXIDOREDUCTASE DOMAIN-CONTAINING PROTEIN"/>
    <property type="match status" value="1"/>
</dbReference>
<dbReference type="SUPFAM" id="SSF51430">
    <property type="entry name" value="NAD(P)-linked oxidoreductase"/>
    <property type="match status" value="1"/>
</dbReference>
<organism>
    <name type="scientific">Oryctolagus cuniculus</name>
    <name type="common">Rabbit</name>
    <dbReference type="NCBI Taxonomy" id="9986"/>
    <lineage>
        <taxon>Eukaryota</taxon>
        <taxon>Metazoa</taxon>
        <taxon>Chordata</taxon>
        <taxon>Craniata</taxon>
        <taxon>Vertebrata</taxon>
        <taxon>Euteleostomi</taxon>
        <taxon>Mammalia</taxon>
        <taxon>Eutheria</taxon>
        <taxon>Euarchontoglires</taxon>
        <taxon>Glires</taxon>
        <taxon>Lagomorpha</taxon>
        <taxon>Leporidae</taxon>
        <taxon>Oryctolagus</taxon>
    </lineage>
</organism>
<proteinExistence type="evidence at protein level"/>
<feature type="chain" id="PRO_0000124645" description="Morphine 6-dehydrogenase">
    <location>
        <begin position="1" status="less than"/>
        <end position="125"/>
    </location>
</feature>
<feature type="binding site" evidence="2">
    <location>
        <begin position="9"/>
        <end position="18"/>
    </location>
    <ligand>
        <name>NADP(+)</name>
        <dbReference type="ChEBI" id="CHEBI:58349"/>
    </ligand>
</feature>
<feature type="binding site" evidence="1">
    <location>
        <begin position="74"/>
        <end position="111"/>
    </location>
    <ligand>
        <name>NADP(+)</name>
        <dbReference type="ChEBI" id="CHEBI:58349"/>
    </ligand>
</feature>
<feature type="non-consecutive residues" evidence="3">
    <location>
        <begin position="27"/>
        <end position="28"/>
    </location>
</feature>
<feature type="non-consecutive residues" evidence="3">
    <location>
        <begin position="40"/>
        <end position="41"/>
    </location>
</feature>
<feature type="non-consecutive residues" evidence="3">
    <location>
        <begin position="50"/>
        <end position="51"/>
    </location>
</feature>
<feature type="non-consecutive residues" evidence="3">
    <location>
        <begin position="66"/>
        <end position="67"/>
    </location>
</feature>
<feature type="non-consecutive residues" evidence="3">
    <location>
        <begin position="84"/>
        <end position="85"/>
    </location>
</feature>
<feature type="non-consecutive residues" evidence="3">
    <location>
        <begin position="113"/>
        <end position="114"/>
    </location>
</feature>
<feature type="non-terminal residue">
    <location>
        <position position="1"/>
    </location>
</feature>
<keyword id="KW-0017">Alkaloid metabolism</keyword>
<keyword id="KW-0963">Cytoplasm</keyword>
<keyword id="KW-0903">Direct protein sequencing</keyword>
<keyword id="KW-0520">NAD</keyword>
<keyword id="KW-0521">NADP</keyword>
<keyword id="KW-0560">Oxidoreductase</keyword>
<keyword id="KW-1185">Reference proteome</keyword>